<reference key="1">
    <citation type="journal article" date="2002" name="Proc. Natl. Acad. Sci. U.S.A.">
        <title>The Brucella suis genome reveals fundamental similarities between animal and plant pathogens and symbionts.</title>
        <authorList>
            <person name="Paulsen I.T."/>
            <person name="Seshadri R."/>
            <person name="Nelson K.E."/>
            <person name="Eisen J.A."/>
            <person name="Heidelberg J.F."/>
            <person name="Read T.D."/>
            <person name="Dodson R.J."/>
            <person name="Umayam L.A."/>
            <person name="Brinkac L.M."/>
            <person name="Beanan M.J."/>
            <person name="Daugherty S.C."/>
            <person name="DeBoy R.T."/>
            <person name="Durkin A.S."/>
            <person name="Kolonay J.F."/>
            <person name="Madupu R."/>
            <person name="Nelson W.C."/>
            <person name="Ayodeji B."/>
            <person name="Kraul M."/>
            <person name="Shetty J."/>
            <person name="Malek J.A."/>
            <person name="Van Aken S.E."/>
            <person name="Riedmuller S."/>
            <person name="Tettelin H."/>
            <person name="Gill S.R."/>
            <person name="White O."/>
            <person name="Salzberg S.L."/>
            <person name="Hoover D.L."/>
            <person name="Lindler L.E."/>
            <person name="Halling S.M."/>
            <person name="Boyle S.M."/>
            <person name="Fraser C.M."/>
        </authorList>
    </citation>
    <scope>NUCLEOTIDE SEQUENCE [LARGE SCALE GENOMIC DNA]</scope>
    <source>
        <strain>1330</strain>
    </source>
</reference>
<reference key="2">
    <citation type="journal article" date="2011" name="J. Bacteriol.">
        <title>Revised genome sequence of Brucella suis 1330.</title>
        <authorList>
            <person name="Tae H."/>
            <person name="Shallom S."/>
            <person name="Settlage R."/>
            <person name="Preston D."/>
            <person name="Adams L.G."/>
            <person name="Garner H.R."/>
        </authorList>
    </citation>
    <scope>NUCLEOTIDE SEQUENCE [LARGE SCALE GENOMIC DNA]</scope>
    <source>
        <strain>1330</strain>
    </source>
</reference>
<keyword id="KW-0030">Aminoacyl-tRNA synthetase</keyword>
<keyword id="KW-0067">ATP-binding</keyword>
<keyword id="KW-0963">Cytoplasm</keyword>
<keyword id="KW-0436">Ligase</keyword>
<keyword id="KW-0547">Nucleotide-binding</keyword>
<keyword id="KW-0648">Protein biosynthesis</keyword>
<proteinExistence type="inferred from homology"/>
<organism>
    <name type="scientific">Brucella suis biovar 1 (strain 1330)</name>
    <dbReference type="NCBI Taxonomy" id="204722"/>
    <lineage>
        <taxon>Bacteria</taxon>
        <taxon>Pseudomonadati</taxon>
        <taxon>Pseudomonadota</taxon>
        <taxon>Alphaproteobacteria</taxon>
        <taxon>Hyphomicrobiales</taxon>
        <taxon>Brucellaceae</taxon>
        <taxon>Brucella/Ochrobactrum group</taxon>
        <taxon>Brucella</taxon>
    </lineage>
</organism>
<sequence length="877" mass="97875">MAAERYNPRVAEAHWQKVWEENRTFETDNSDSREKYYVLEMFPYPSGRIHMGHVRNYAMGDVVARYKRAKGFNVLHPMGWDAFGMPAENAAMQNKVHPKEWTYQNIATMKRQLKSMGLSLDWSREFATCDVEYYHRQQMLFIDLYEKGLVTRKTSKVNWDPVDNTVLANEQVVDGRGWRSGALVEQRELTQWFFKITDFSEELLAGLDTLDQWPEKVRLMQRNWIGKSEGLQVRFALAAGTAPAGFSEVEVYTTRPDTLFGAAFVAISADHPLAKKLSEGNAALSSFIEECHQQGTSLAALETAEKKGFDTGIKVKHPFDDNWELPVYVANFVLMEYGTGAVFGCPAHDQRDLDFANKYKLKVTPVVLPKGEDAASFSIGETAYTDDGVMINSRFLDGMTPEAAFNEVASRLEKTDLVGRPQAVRKVQFRLRDWGISRQRYWGCPIPMIHCESCGVNPVPRADLPVKLPDDVEFDRPGNPLDRHATWRHVKCPKCGGDARRETDTMDTFVDSSWYYTRFTAPWENEPTDRKAADHWLPVDQYIGGIEHAILHLLYSRFFTRAMKVAGHVGVDEPFKGLFTQGMVVHETYKANGQWVSPADIRIEEIDGKRVATMLDSGAPVEIGSIEKMSKSKKNVVDPDDIIASYGADIARWFVLSDSPPERDVIWTEAGAEGAHRFVQRIWRLVAEAAPALKDVAPKAGTQGEALGVSKAAHKAVKAVGDDIEKLAFNRGVARLYELVNTLSGALQQAADGKADAEMKGALREATEMLVLMTAPMMPHLAEQCLAELGGKVAGKETLVARAPWPVFDPALVVENEIVLPVQINGKKRGDLTIARDADQASIQQAVLELDFVKAALNGGSPKKIIVVPQRIVNVVA</sequence>
<dbReference type="EC" id="6.1.1.4" evidence="1"/>
<dbReference type="EMBL" id="AE014291">
    <property type="protein sequence ID" value="AAN30702.1"/>
    <property type="molecule type" value="Genomic_DNA"/>
</dbReference>
<dbReference type="EMBL" id="CP002997">
    <property type="protein sequence ID" value="AEM19119.1"/>
    <property type="molecule type" value="Genomic_DNA"/>
</dbReference>
<dbReference type="RefSeq" id="WP_006192554.1">
    <property type="nucleotide sequence ID" value="NZ_KN046804.1"/>
</dbReference>
<dbReference type="SMR" id="Q8FYQ7"/>
<dbReference type="GeneID" id="45052763"/>
<dbReference type="KEGG" id="bms:BR1807"/>
<dbReference type="KEGG" id="bsi:BS1330_I1801"/>
<dbReference type="PATRIC" id="fig|204722.21.peg.1175"/>
<dbReference type="HOGENOM" id="CLU_004427_0_0_5"/>
<dbReference type="PhylomeDB" id="Q8FYQ7"/>
<dbReference type="Proteomes" id="UP000007104">
    <property type="component" value="Chromosome I"/>
</dbReference>
<dbReference type="GO" id="GO:0005829">
    <property type="term" value="C:cytosol"/>
    <property type="evidence" value="ECO:0007669"/>
    <property type="project" value="TreeGrafter"/>
</dbReference>
<dbReference type="GO" id="GO:0002161">
    <property type="term" value="F:aminoacyl-tRNA deacylase activity"/>
    <property type="evidence" value="ECO:0007669"/>
    <property type="project" value="InterPro"/>
</dbReference>
<dbReference type="GO" id="GO:0005524">
    <property type="term" value="F:ATP binding"/>
    <property type="evidence" value="ECO:0007669"/>
    <property type="project" value="UniProtKB-UniRule"/>
</dbReference>
<dbReference type="GO" id="GO:0004823">
    <property type="term" value="F:leucine-tRNA ligase activity"/>
    <property type="evidence" value="ECO:0007669"/>
    <property type="project" value="UniProtKB-UniRule"/>
</dbReference>
<dbReference type="GO" id="GO:0006429">
    <property type="term" value="P:leucyl-tRNA aminoacylation"/>
    <property type="evidence" value="ECO:0007669"/>
    <property type="project" value="UniProtKB-UniRule"/>
</dbReference>
<dbReference type="CDD" id="cd07958">
    <property type="entry name" value="Anticodon_Ia_Leu_BEm"/>
    <property type="match status" value="1"/>
</dbReference>
<dbReference type="CDD" id="cd00812">
    <property type="entry name" value="LeuRS_core"/>
    <property type="match status" value="1"/>
</dbReference>
<dbReference type="FunFam" id="1.10.730.10:FF:000002">
    <property type="entry name" value="Leucine--tRNA ligase"/>
    <property type="match status" value="1"/>
</dbReference>
<dbReference type="FunFam" id="3.40.50.620:FF:000003">
    <property type="entry name" value="Leucine--tRNA ligase"/>
    <property type="match status" value="1"/>
</dbReference>
<dbReference type="Gene3D" id="2.20.28.290">
    <property type="match status" value="1"/>
</dbReference>
<dbReference type="Gene3D" id="3.10.20.590">
    <property type="match status" value="1"/>
</dbReference>
<dbReference type="Gene3D" id="3.40.50.620">
    <property type="entry name" value="HUPs"/>
    <property type="match status" value="2"/>
</dbReference>
<dbReference type="Gene3D" id="1.10.730.10">
    <property type="entry name" value="Isoleucyl-tRNA Synthetase, Domain 1"/>
    <property type="match status" value="1"/>
</dbReference>
<dbReference type="Gene3D" id="3.90.740.10">
    <property type="entry name" value="Valyl/Leucyl/Isoleucyl-tRNA synthetase, editing domain"/>
    <property type="match status" value="1"/>
</dbReference>
<dbReference type="HAMAP" id="MF_00049_B">
    <property type="entry name" value="Leu_tRNA_synth_B"/>
    <property type="match status" value="1"/>
</dbReference>
<dbReference type="InterPro" id="IPR001412">
    <property type="entry name" value="aa-tRNA-synth_I_CS"/>
</dbReference>
<dbReference type="InterPro" id="IPR002300">
    <property type="entry name" value="aa-tRNA-synth_Ia"/>
</dbReference>
<dbReference type="InterPro" id="IPR002302">
    <property type="entry name" value="Leu-tRNA-ligase"/>
</dbReference>
<dbReference type="InterPro" id="IPR025709">
    <property type="entry name" value="Leu_tRNA-synth_edit"/>
</dbReference>
<dbReference type="InterPro" id="IPR013155">
    <property type="entry name" value="M/V/L/I-tRNA-synth_anticd-bd"/>
</dbReference>
<dbReference type="InterPro" id="IPR015413">
    <property type="entry name" value="Methionyl/Leucyl_tRNA_Synth"/>
</dbReference>
<dbReference type="InterPro" id="IPR014729">
    <property type="entry name" value="Rossmann-like_a/b/a_fold"/>
</dbReference>
<dbReference type="InterPro" id="IPR009080">
    <property type="entry name" value="tRNAsynth_Ia_anticodon-bd"/>
</dbReference>
<dbReference type="InterPro" id="IPR009008">
    <property type="entry name" value="Val/Leu/Ile-tRNA-synth_edit"/>
</dbReference>
<dbReference type="NCBIfam" id="TIGR00396">
    <property type="entry name" value="leuS_bact"/>
    <property type="match status" value="1"/>
</dbReference>
<dbReference type="PANTHER" id="PTHR43740:SF2">
    <property type="entry name" value="LEUCINE--TRNA LIGASE, MITOCHONDRIAL"/>
    <property type="match status" value="1"/>
</dbReference>
<dbReference type="PANTHER" id="PTHR43740">
    <property type="entry name" value="LEUCYL-TRNA SYNTHETASE"/>
    <property type="match status" value="1"/>
</dbReference>
<dbReference type="Pfam" id="PF08264">
    <property type="entry name" value="Anticodon_1"/>
    <property type="match status" value="1"/>
</dbReference>
<dbReference type="Pfam" id="PF00133">
    <property type="entry name" value="tRNA-synt_1"/>
    <property type="match status" value="2"/>
</dbReference>
<dbReference type="Pfam" id="PF13603">
    <property type="entry name" value="tRNA-synt_1_2"/>
    <property type="match status" value="1"/>
</dbReference>
<dbReference type="Pfam" id="PF09334">
    <property type="entry name" value="tRNA-synt_1g"/>
    <property type="match status" value="1"/>
</dbReference>
<dbReference type="PRINTS" id="PR00985">
    <property type="entry name" value="TRNASYNTHLEU"/>
</dbReference>
<dbReference type="SUPFAM" id="SSF47323">
    <property type="entry name" value="Anticodon-binding domain of a subclass of class I aminoacyl-tRNA synthetases"/>
    <property type="match status" value="1"/>
</dbReference>
<dbReference type="SUPFAM" id="SSF52374">
    <property type="entry name" value="Nucleotidylyl transferase"/>
    <property type="match status" value="1"/>
</dbReference>
<dbReference type="SUPFAM" id="SSF50677">
    <property type="entry name" value="ValRS/IleRS/LeuRS editing domain"/>
    <property type="match status" value="1"/>
</dbReference>
<dbReference type="PROSITE" id="PS00178">
    <property type="entry name" value="AA_TRNA_LIGASE_I"/>
    <property type="match status" value="1"/>
</dbReference>
<feature type="chain" id="PRO_0000151986" description="Leucine--tRNA ligase">
    <location>
        <begin position="1"/>
        <end position="877"/>
    </location>
</feature>
<feature type="short sequence motif" description="'HIGH' region">
    <location>
        <begin position="43"/>
        <end position="53"/>
    </location>
</feature>
<feature type="short sequence motif" description="'KMSKS' region">
    <location>
        <begin position="628"/>
        <end position="632"/>
    </location>
</feature>
<feature type="binding site" evidence="1">
    <location>
        <position position="631"/>
    </location>
    <ligand>
        <name>ATP</name>
        <dbReference type="ChEBI" id="CHEBI:30616"/>
    </ligand>
</feature>
<accession>Q8FYQ7</accession>
<accession>G0K7E3</accession>
<name>SYL_BRUSU</name>
<gene>
    <name evidence="1" type="primary">leuS</name>
    <name type="ordered locus">BR1807</name>
    <name type="ordered locus">BS1330_I1801</name>
</gene>
<evidence type="ECO:0000255" key="1">
    <source>
        <dbReference type="HAMAP-Rule" id="MF_00049"/>
    </source>
</evidence>
<protein>
    <recommendedName>
        <fullName evidence="1">Leucine--tRNA ligase</fullName>
        <ecNumber evidence="1">6.1.1.4</ecNumber>
    </recommendedName>
    <alternativeName>
        <fullName evidence="1">Leucyl-tRNA synthetase</fullName>
        <shortName evidence="1">LeuRS</shortName>
    </alternativeName>
</protein>
<comment type="catalytic activity">
    <reaction evidence="1">
        <text>tRNA(Leu) + L-leucine + ATP = L-leucyl-tRNA(Leu) + AMP + diphosphate</text>
        <dbReference type="Rhea" id="RHEA:11688"/>
        <dbReference type="Rhea" id="RHEA-COMP:9613"/>
        <dbReference type="Rhea" id="RHEA-COMP:9622"/>
        <dbReference type="ChEBI" id="CHEBI:30616"/>
        <dbReference type="ChEBI" id="CHEBI:33019"/>
        <dbReference type="ChEBI" id="CHEBI:57427"/>
        <dbReference type="ChEBI" id="CHEBI:78442"/>
        <dbReference type="ChEBI" id="CHEBI:78494"/>
        <dbReference type="ChEBI" id="CHEBI:456215"/>
        <dbReference type="EC" id="6.1.1.4"/>
    </reaction>
</comment>
<comment type="subcellular location">
    <subcellularLocation>
        <location evidence="1">Cytoplasm</location>
    </subcellularLocation>
</comment>
<comment type="similarity">
    <text evidence="1">Belongs to the class-I aminoacyl-tRNA synthetase family.</text>
</comment>